<feature type="chain" id="PRO_1000005828" description="Probable GTP-binding protein EngB">
    <location>
        <begin position="1"/>
        <end position="221"/>
    </location>
</feature>
<feature type="domain" description="EngB-type G" evidence="1">
    <location>
        <begin position="32"/>
        <end position="205"/>
    </location>
</feature>
<feature type="binding site" evidence="1">
    <location>
        <begin position="40"/>
        <end position="47"/>
    </location>
    <ligand>
        <name>GTP</name>
        <dbReference type="ChEBI" id="CHEBI:37565"/>
    </ligand>
</feature>
<feature type="binding site" evidence="1">
    <location>
        <position position="47"/>
    </location>
    <ligand>
        <name>Mg(2+)</name>
        <dbReference type="ChEBI" id="CHEBI:18420"/>
    </ligand>
</feature>
<feature type="binding site" evidence="1">
    <location>
        <begin position="67"/>
        <end position="71"/>
    </location>
    <ligand>
        <name>GTP</name>
        <dbReference type="ChEBI" id="CHEBI:37565"/>
    </ligand>
</feature>
<feature type="binding site" evidence="1">
    <location>
        <position position="69"/>
    </location>
    <ligand>
        <name>Mg(2+)</name>
        <dbReference type="ChEBI" id="CHEBI:18420"/>
    </ligand>
</feature>
<feature type="binding site" evidence="1">
    <location>
        <begin position="85"/>
        <end position="88"/>
    </location>
    <ligand>
        <name>GTP</name>
        <dbReference type="ChEBI" id="CHEBI:37565"/>
    </ligand>
</feature>
<feature type="binding site" evidence="1">
    <location>
        <begin position="152"/>
        <end position="155"/>
    </location>
    <ligand>
        <name>GTP</name>
        <dbReference type="ChEBI" id="CHEBI:37565"/>
    </ligand>
</feature>
<feature type="binding site" evidence="1">
    <location>
        <begin position="184"/>
        <end position="186"/>
    </location>
    <ligand>
        <name>GTP</name>
        <dbReference type="ChEBI" id="CHEBI:37565"/>
    </ligand>
</feature>
<organism>
    <name type="scientific">Leptospira borgpetersenii serovar Hardjo-bovis (strain JB197)</name>
    <dbReference type="NCBI Taxonomy" id="355277"/>
    <lineage>
        <taxon>Bacteria</taxon>
        <taxon>Pseudomonadati</taxon>
        <taxon>Spirochaetota</taxon>
        <taxon>Spirochaetia</taxon>
        <taxon>Leptospirales</taxon>
        <taxon>Leptospiraceae</taxon>
        <taxon>Leptospira</taxon>
    </lineage>
</organism>
<dbReference type="EMBL" id="CP000350">
    <property type="protein sequence ID" value="ABJ74871.1"/>
    <property type="molecule type" value="Genomic_DNA"/>
</dbReference>
<dbReference type="SMR" id="Q04W49"/>
<dbReference type="KEGG" id="lbj:LBJ_0127"/>
<dbReference type="HOGENOM" id="CLU_033732_3_0_12"/>
<dbReference type="Proteomes" id="UP000000656">
    <property type="component" value="Chromosome 1"/>
</dbReference>
<dbReference type="GO" id="GO:0005829">
    <property type="term" value="C:cytosol"/>
    <property type="evidence" value="ECO:0007669"/>
    <property type="project" value="TreeGrafter"/>
</dbReference>
<dbReference type="GO" id="GO:0005525">
    <property type="term" value="F:GTP binding"/>
    <property type="evidence" value="ECO:0007669"/>
    <property type="project" value="UniProtKB-UniRule"/>
</dbReference>
<dbReference type="GO" id="GO:0046872">
    <property type="term" value="F:metal ion binding"/>
    <property type="evidence" value="ECO:0007669"/>
    <property type="project" value="UniProtKB-KW"/>
</dbReference>
<dbReference type="GO" id="GO:0000917">
    <property type="term" value="P:division septum assembly"/>
    <property type="evidence" value="ECO:0007669"/>
    <property type="project" value="UniProtKB-KW"/>
</dbReference>
<dbReference type="CDD" id="cd01876">
    <property type="entry name" value="YihA_EngB"/>
    <property type="match status" value="1"/>
</dbReference>
<dbReference type="FunFam" id="3.40.50.300:FF:001611">
    <property type="entry name" value="Probable GTP-binding protein EngB"/>
    <property type="match status" value="1"/>
</dbReference>
<dbReference type="Gene3D" id="3.40.50.300">
    <property type="entry name" value="P-loop containing nucleotide triphosphate hydrolases"/>
    <property type="match status" value="1"/>
</dbReference>
<dbReference type="HAMAP" id="MF_00321">
    <property type="entry name" value="GTPase_EngB"/>
    <property type="match status" value="1"/>
</dbReference>
<dbReference type="InterPro" id="IPR030393">
    <property type="entry name" value="G_ENGB_dom"/>
</dbReference>
<dbReference type="InterPro" id="IPR006073">
    <property type="entry name" value="GTP-bd"/>
</dbReference>
<dbReference type="InterPro" id="IPR019987">
    <property type="entry name" value="GTP-bd_ribosome_bio_YsxC"/>
</dbReference>
<dbReference type="InterPro" id="IPR027417">
    <property type="entry name" value="P-loop_NTPase"/>
</dbReference>
<dbReference type="NCBIfam" id="TIGR03598">
    <property type="entry name" value="GTPase_YsxC"/>
    <property type="match status" value="1"/>
</dbReference>
<dbReference type="PANTHER" id="PTHR11649:SF13">
    <property type="entry name" value="ENGB-TYPE G DOMAIN-CONTAINING PROTEIN"/>
    <property type="match status" value="1"/>
</dbReference>
<dbReference type="PANTHER" id="PTHR11649">
    <property type="entry name" value="MSS1/TRME-RELATED GTP-BINDING PROTEIN"/>
    <property type="match status" value="1"/>
</dbReference>
<dbReference type="Pfam" id="PF01926">
    <property type="entry name" value="MMR_HSR1"/>
    <property type="match status" value="1"/>
</dbReference>
<dbReference type="SUPFAM" id="SSF52540">
    <property type="entry name" value="P-loop containing nucleoside triphosphate hydrolases"/>
    <property type="match status" value="1"/>
</dbReference>
<dbReference type="PROSITE" id="PS51706">
    <property type="entry name" value="G_ENGB"/>
    <property type="match status" value="1"/>
</dbReference>
<reference key="1">
    <citation type="journal article" date="2006" name="Proc. Natl. Acad. Sci. U.S.A.">
        <title>Genome reduction in Leptospira borgpetersenii reflects limited transmission potential.</title>
        <authorList>
            <person name="Bulach D.M."/>
            <person name="Zuerner R.L."/>
            <person name="Wilson P."/>
            <person name="Seemann T."/>
            <person name="McGrath A."/>
            <person name="Cullen P.A."/>
            <person name="Davis J."/>
            <person name="Johnson M."/>
            <person name="Kuczek E."/>
            <person name="Alt D.P."/>
            <person name="Peterson-Burch B."/>
            <person name="Coppel R.L."/>
            <person name="Rood J.I."/>
            <person name="Davies J.K."/>
            <person name="Adler B."/>
        </authorList>
    </citation>
    <scope>NUCLEOTIDE SEQUENCE [LARGE SCALE GENOMIC DNA]</scope>
    <source>
        <strain>JB197</strain>
    </source>
</reference>
<evidence type="ECO:0000255" key="1">
    <source>
        <dbReference type="HAMAP-Rule" id="MF_00321"/>
    </source>
</evidence>
<sequence>MNEDPQKKDEPFFKDVEFKASYGEANQIPSQGIPQIAFAGRSNAGKSSLLNAILERKSLAKVSSTPGKTKLLNFFFVNRSIYLVDLPGFGYSANSHKDHEAMMDLLMDYLNLAKDLKCLFLVCDSQRELPEEELELIGTCFERNIKPVLVRTKIDKLNQSDLSKLRKKMKNIHELYPMLETVLVSNKSGKGLPELRKIVDSLITTVGTLVEGNTKKIEGIS</sequence>
<protein>
    <recommendedName>
        <fullName evidence="1">Probable GTP-binding protein EngB</fullName>
    </recommendedName>
</protein>
<keyword id="KW-0131">Cell cycle</keyword>
<keyword id="KW-0132">Cell division</keyword>
<keyword id="KW-0342">GTP-binding</keyword>
<keyword id="KW-0460">Magnesium</keyword>
<keyword id="KW-0479">Metal-binding</keyword>
<keyword id="KW-0547">Nucleotide-binding</keyword>
<keyword id="KW-0717">Septation</keyword>
<gene>
    <name evidence="1" type="primary">engB</name>
    <name type="ordered locus">LBJ_0127</name>
</gene>
<accession>Q04W49</accession>
<proteinExistence type="inferred from homology"/>
<name>ENGB_LEPBJ</name>
<comment type="function">
    <text evidence="1">Necessary for normal cell division and for the maintenance of normal septation.</text>
</comment>
<comment type="cofactor">
    <cofactor evidence="1">
        <name>Mg(2+)</name>
        <dbReference type="ChEBI" id="CHEBI:18420"/>
    </cofactor>
</comment>
<comment type="similarity">
    <text evidence="1">Belongs to the TRAFAC class TrmE-Era-EngA-EngB-Septin-like GTPase superfamily. EngB GTPase family.</text>
</comment>